<organism>
    <name type="scientific">Halobacterium salinarum (strain ATCC 700922 / JCM 11081 / NRC-1)</name>
    <name type="common">Halobacterium halobium</name>
    <dbReference type="NCBI Taxonomy" id="64091"/>
    <lineage>
        <taxon>Archaea</taxon>
        <taxon>Methanobacteriati</taxon>
        <taxon>Methanobacteriota</taxon>
        <taxon>Stenosarchaea group</taxon>
        <taxon>Halobacteria</taxon>
        <taxon>Halobacteriales</taxon>
        <taxon>Halobacteriaceae</taxon>
        <taxon>Halobacterium</taxon>
        <taxon>Halobacterium salinarum NRC-34001</taxon>
    </lineage>
</organism>
<feature type="chain" id="PRO_0000182690" description="Gas vesicle protein I1">
    <location>
        <begin position="1"/>
        <end position="144"/>
    </location>
</feature>
<feature type="region of interest" description="Disordered" evidence="1">
    <location>
        <begin position="1"/>
        <end position="144"/>
    </location>
</feature>
<feature type="compositionally biased region" description="Basic residues" evidence="1">
    <location>
        <begin position="7"/>
        <end position="17"/>
    </location>
</feature>
<feature type="compositionally biased region" description="Basic residues" evidence="1">
    <location>
        <begin position="26"/>
        <end position="46"/>
    </location>
</feature>
<feature type="compositionally biased region" description="Polar residues" evidence="1">
    <location>
        <begin position="75"/>
        <end position="94"/>
    </location>
</feature>
<feature type="compositionally biased region" description="Low complexity" evidence="1">
    <location>
        <begin position="122"/>
        <end position="136"/>
    </location>
</feature>
<feature type="sequence conflict" description="In Ref. 2; CAA39176." evidence="15" ref="2">
    <original>N</original>
    <variation>T</variation>
    <location>
        <position position="23"/>
    </location>
</feature>
<feature type="sequence conflict" description="In Ref. 2; CAA39176." evidence="15" ref="2">
    <original>R</original>
    <variation>W</variation>
    <location>
        <position position="42"/>
    </location>
</feature>
<feature type="sequence conflict" description="In Ref. 2; CAA39176." evidence="15" ref="2">
    <original>TEDEVNDE</original>
    <variation>LRTR</variation>
    <location>
        <begin position="137"/>
        <end position="144"/>
    </location>
</feature>
<reference evidence="17" key="1">
    <citation type="journal article" date="1991" name="Gene">
        <title>Structure and organization of the gas vesicle gene cluster on the Halobacterium halobium plasmid pNRC100.</title>
        <authorList>
            <person name="Jones J.G."/>
            <person name="Young D.C."/>
            <person name="Dassarma S."/>
        </authorList>
    </citation>
    <scope>NUCLEOTIDE SEQUENCE [GENOMIC DNA]</scope>
    <source>
        <strain>ATCC 700922 / JCM 11081 / NRC-1</strain>
        <plasmid>pNRC100</plasmid>
    </source>
</reference>
<reference evidence="19" key="2">
    <citation type="journal article" date="1991" name="Mol. Microbiol.">
        <title>A DNA region of 9 kbp contains all genes necessary for gas vesicle synthesis in halophilic archaebacteria.</title>
        <authorList>
            <person name="Horne M."/>
            <person name="Englert C."/>
            <person name="Wimmer C."/>
            <person name="Pfeifer F."/>
        </authorList>
    </citation>
    <scope>NUCLEOTIDE SEQUENCE [GENOMIC DNA]</scope>
    <scope>INDUCTION</scope>
    <source>
        <strain>NRC-817</strain>
        <plasmid>pHH1</plasmid>
    </source>
</reference>
<reference key="3">
    <citation type="journal article" date="1998" name="Genome Res.">
        <title>Snapshot of a large dynamic replicon in a halophilic archaeon: megaplasmid or minichromosome?</title>
        <authorList>
            <person name="Ng W.V."/>
            <person name="Ciufo S.A."/>
            <person name="Smith T.M."/>
            <person name="Bumgarner R.E."/>
            <person name="Baskin D."/>
            <person name="Faust J."/>
            <person name="Hall B."/>
            <person name="Loretz C."/>
            <person name="Seto J."/>
            <person name="Slagel J."/>
            <person name="Hood L."/>
            <person name="DasSarma S."/>
        </authorList>
    </citation>
    <scope>NUCLEOTIDE SEQUENCE [LARGE SCALE GENOMIC DNA]</scope>
    <source>
        <strain>ATCC 700922 / JCM 11081 / NRC-1</strain>
        <plasmid>pNRC100</plasmid>
    </source>
</reference>
<reference evidence="18" key="4">
    <citation type="journal article" date="2000" name="Proc. Natl. Acad. Sci. U.S.A.">
        <title>Genome sequence of Halobacterium species NRC-1.</title>
        <authorList>
            <person name="Ng W.V."/>
            <person name="Kennedy S.P."/>
            <person name="Mahairas G.G."/>
            <person name="Berquist B."/>
            <person name="Pan M."/>
            <person name="Shukla H.D."/>
            <person name="Lasky S.R."/>
            <person name="Baliga N.S."/>
            <person name="Thorsson V."/>
            <person name="Sbrogna J."/>
            <person name="Swartzell S."/>
            <person name="Weir D."/>
            <person name="Hall J."/>
            <person name="Dahl T.A."/>
            <person name="Welti R."/>
            <person name="Goo Y.A."/>
            <person name="Leithauser B."/>
            <person name="Keller K."/>
            <person name="Cruz R."/>
            <person name="Danson M.J."/>
            <person name="Hough D.W."/>
            <person name="Maddocks D.G."/>
            <person name="Jablonski P.E."/>
            <person name="Krebs M.P."/>
            <person name="Angevine C.M."/>
            <person name="Dale H."/>
            <person name="Isenbarger T.A."/>
            <person name="Peck R.F."/>
            <person name="Pohlschroder M."/>
            <person name="Spudich J.L."/>
            <person name="Jung K.-H."/>
            <person name="Alam M."/>
            <person name="Freitas T."/>
            <person name="Hou S."/>
            <person name="Daniels C.J."/>
            <person name="Dennis P.P."/>
            <person name="Omer A.D."/>
            <person name="Ebhardt H."/>
            <person name="Lowe T.M."/>
            <person name="Liang P."/>
            <person name="Riley M."/>
            <person name="Hood L."/>
            <person name="DasSarma S."/>
        </authorList>
    </citation>
    <scope>NUCLEOTIDE SEQUENCE [LARGE SCALE GENOMIC DNA]</scope>
    <source>
        <strain>ATCC 700922 / JCM 11081 / NRC-1</strain>
        <plasmid>pNRC200</plasmid>
    </source>
</reference>
<reference key="5">
    <citation type="journal article" date="1992" name="Gene">
        <title>Genetic transformation of a halophilic archaebacterium with a gas vesicle gene cluster restores its ability to float.</title>
        <authorList>
            <person name="Halladay J.T."/>
            <person name="Ng W.L."/>
            <person name="DasSarma S."/>
        </authorList>
    </citation>
    <scope>FUNCTION</scope>
    <scope>GAS VESICLE PRODUCTION</scope>
    <source>
        <strain>ATCC 700922 / JCM 11081 / NRC-1</strain>
        <plasmid>pNRC100</plasmid>
    </source>
</reference>
<reference key="6">
    <citation type="journal article" date="1992" name="J. Mol. Biol.">
        <title>Three different but related gene clusters encoding gas vesicles in halophilic archaea.</title>
        <authorList>
            <person name="Englert C."/>
            <person name="Krueger K."/>
            <person name="Offner S."/>
            <person name="Pfeifer F."/>
        </authorList>
    </citation>
    <scope>GAS VESICLE GENE CLUSTER</scope>
    <source>
        <strain>NRC-817</strain>
        <plasmid>pHH1</plasmid>
    </source>
</reference>
<reference key="7">
    <citation type="journal article" date="1994" name="J. Bacteriol.">
        <title>Wild-type gas vesicle formation requires at least ten genes in the gvp gene cluster of Halobacterium halobium plasmid pNRC100.</title>
        <authorList>
            <person name="DasSarma S."/>
            <person name="Arora P."/>
            <person name="Lin F."/>
            <person name="Molinari E."/>
            <person name="Yin L.R."/>
        </authorList>
    </citation>
    <scope>DISRUPTION PHENOTYPE</scope>
    <source>
        <strain>ATCC 700922 / JCM 11081 / NRC-1</strain>
        <plasmid>pNRC100</plasmid>
    </source>
</reference>
<reference key="8">
    <citation type="journal article" date="1995" name="Mol. Microbiol.">
        <title>Complementation studies with the gas vesicle-encoding p-vac region of Halobacterium salinarium PHH1 reveal a regulatory role for the p-gvpDE genes.</title>
        <authorList>
            <person name="Offner S."/>
            <person name="Pfeifer F."/>
        </authorList>
    </citation>
    <scope>FUNCTION</scope>
    <scope>INDUCTION</scope>
    <scope>DISRUPTION PHENOTYPE</scope>
    <source>
        <strain>PHH1</strain>
    </source>
</reference>
<reference key="9">
    <citation type="journal article" date="1997" name="Microbiology">
        <title>Growth competition between Halobacterium salinarium strain PHH1 and mutants affected in gas vesicle synthesis.</title>
        <authorList>
            <person name="Beard S.J."/>
            <person name="Hayes P.K."/>
            <person name="Walsby A.E."/>
        </authorList>
    </citation>
    <scope>FUNCTION IN BUOYANCY</scope>
    <scope>POSSIBLE INDUCTION BY OXYGEN LIMITATION</scope>
    <source>
        <strain>PHH1</strain>
    </source>
</reference>
<reference key="10">
    <citation type="journal article" date="2000" name="J. Bacteriol.">
        <title>Eight of fourteen gvp genes are sufficient for formation of gas vesicles in halophilic archaea.</title>
        <authorList>
            <person name="Offner S."/>
            <person name="Hofacker A."/>
            <person name="Wanner G."/>
            <person name="Pfeifer F."/>
        </authorList>
    </citation>
    <scope>DISRUPTION PHENOTYPE</scope>
    <source>
        <strain>PHH1</strain>
        <plasmid>pHH1</plasmid>
    </source>
</reference>
<reference key="11">
    <citation type="journal article" date="2011" name="J. Proteome Res.">
        <title>New structural proteins of Halobacterium salinarum gas vesicle revealed by comparative proteomics analysis.</title>
        <authorList>
            <person name="Chu L.J."/>
            <person name="Chen M.C."/>
            <person name="Setter J."/>
            <person name="Tsai Y.S."/>
            <person name="Yang H."/>
            <person name="Fang X."/>
            <person name="Ting Y.S."/>
            <person name="Shaffer S.A."/>
            <person name="Taylor G.K."/>
            <person name="von Haller P.D."/>
            <person name="Goodlett D.R."/>
            <person name="Ng W.V."/>
        </authorList>
    </citation>
    <scope>SUBCELLULAR LOCATION</scope>
    <scope>IDENTIFICATION BY MASS SPECTROMETRY</scope>
    <source>
        <strain>ATCC 700922 / JCM 11081 / NRC-1</strain>
    </source>
</reference>
<reference key="12">
    <citation type="journal article" date="2020" name="Front. Microbiol.">
        <title>Accessory Gvp Proteins Form a Complex During Gas Vesicle Formation of Haloarchaea.</title>
        <authorList>
            <person name="Voelkner K."/>
            <person name="Jost A."/>
            <person name="Pfeifer F."/>
        </authorList>
    </citation>
    <scope>FUNCTION</scope>
    <scope>SUBUNIT</scope>
    <source>
        <strain>PHH1</strain>
        <plasmid>pHH1</plasmid>
    </source>
</reference>
<reference key="13">
    <citation type="journal article" date="2022" name="Front. Microbiol.">
        <title>Interaction of the gas vesicle proteins GvpA, GvpC, GvpN, and GvpO of Halobacterium salinarum.</title>
        <authorList>
            <person name="Jost A."/>
            <person name="Pfeifer F."/>
        </authorList>
    </citation>
    <scope>SUBUNIT</scope>
    <source>
        <strain>PHH1</strain>
        <plasmid>pHH1</plasmid>
    </source>
</reference>
<evidence type="ECO:0000256" key="1">
    <source>
        <dbReference type="SAM" id="MobiDB-lite"/>
    </source>
</evidence>
<evidence type="ECO:0000269" key="2">
    <source>
    </source>
</evidence>
<evidence type="ECO:0000269" key="3">
    <source>
    </source>
</evidence>
<evidence type="ECO:0000269" key="4">
    <source>
    </source>
</evidence>
<evidence type="ECO:0000269" key="5">
    <source>
    </source>
</evidence>
<evidence type="ECO:0000269" key="6">
    <source>
    </source>
</evidence>
<evidence type="ECO:0000269" key="7">
    <source>
    </source>
</evidence>
<evidence type="ECO:0000269" key="8">
    <source>
    </source>
</evidence>
<evidence type="ECO:0000269" key="9">
    <source>
    </source>
</evidence>
<evidence type="ECO:0000269" key="10">
    <source>
    </source>
</evidence>
<evidence type="ECO:0000269" key="11">
    <source>
    </source>
</evidence>
<evidence type="ECO:0000303" key="12">
    <source>
    </source>
</evidence>
<evidence type="ECO:0000303" key="13">
    <source>
    </source>
</evidence>
<evidence type="ECO:0000303" key="14">
    <source>
    </source>
</evidence>
<evidence type="ECO:0000305" key="15"/>
<evidence type="ECO:0000305" key="16">
    <source>
    </source>
</evidence>
<evidence type="ECO:0000312" key="17">
    <source>
        <dbReference type="EMBL" id="AAA98190.1"/>
    </source>
</evidence>
<evidence type="ECO:0000312" key="18">
    <source>
        <dbReference type="EMBL" id="AAG20720.1"/>
    </source>
</evidence>
<evidence type="ECO:0000312" key="19">
    <source>
        <dbReference type="EMBL" id="CAA39176.1"/>
    </source>
</evidence>
<comment type="function">
    <text evidence="6 8 16">Proteins GvpF to GvpM might be involved in nucleating gas vesicle formation (Probable). A minor component of the gas vesicle (PubMed:21158390). Gas vesicles are hollow, gas filled proteinaceous nanostructures found in several microbial planktonic microorganisms. They allow positioning of halobacteria at the optimal depth for growth in the poorly aerated, shallow brine pools of their habitat (PubMed:33711860).</text>
</comment>
<comment type="function">
    <text evidence="2 3 4 10 11">Expression of a 9.5 kb p-vac DNA fragment containing 2 divergently transcribed regions (gvpD-gvpE-gvpF-gvpG-gvpH-gvpI-gvpJ-gvpK-gvpL-gvpM and gvpA-gvpC-gvpN-gvpO) allows H.volcanii to produce gas vesicles (PubMed:10894744, PubMed:1404376, PubMed:7651141). A similar region restores gas vesicle production in H.halobium without the p-vac locus, but it still has the c-vac locus (PubMed:1398080, PubMed:8002589).</text>
</comment>
<comment type="subunit">
    <text evidence="7 9">GvpF to GvpM interact with each other in vitro, and may form multi-subunit complex(es) (PubMed:33281806). Interacts with GvpC1 and GvpO (PubMed:35966690).</text>
</comment>
<comment type="subcellular location">
    <subcellularLocation>
        <location evidence="6">Gas vesicle</location>
    </subcellularLocation>
</comment>
<comment type="induction">
    <text evidence="5 8 10">Part of a gvpF1-gvpG1-gvpH1-gvpI1-gvpJ1-gvpK1-gvpL1-gvpM1 operon, maximally expressed in early to mid log phase (PubMed:1956294, PubMed:7651141). Gas vesicles appear earlier when grown in static culture, possibly due to O(2)-limitation (PubMed:33711860).</text>
</comment>
<comment type="disruption phenotype">
    <text evidence="2 10 11">A single deletion produces no gas vesicles, in situ (PubMed:8002589). Deletion of gvpG1-gvpH1-gvpI1 prevents gas vesicle formation, cells still express gvpA1 (PubMed:7651141). A single deletion makes gas vesicles as long as the cell that sometime distort its shape. Complemention restores wild-type gas vesicles, in H.volcanii (PubMed:10894744).</text>
</comment>
<comment type="miscellaneous">
    <text evidence="4 5 8">Encoded in a 14-gene plasmid locus called p-vac which produces predominantly short, spindle-shaped gas vesicles during all stages of growth.</text>
</comment>
<comment type="similarity">
    <text evidence="15">Belongs to the gas vesicle GvpI family.</text>
</comment>
<proteinExistence type="evidence at protein level"/>
<geneLocation type="plasmid">
    <name>pNRC100</name>
</geneLocation>
<geneLocation type="plasmid">
    <name>pNRC200</name>
</geneLocation>
<geneLocation type="plasmid">
    <name>pHH1</name>
</geneLocation>
<name>GVPI1_HALSA</name>
<keyword id="KW-0304">Gas vesicle</keyword>
<keyword id="KW-0614">Plasmid</keyword>
<keyword id="KW-1185">Reference proteome</keyword>
<sequence>MSDKQQQKHKQKARQARVKAQINRDKARRNLLRQREKLARRRTRNRKQSEPRRDDSDGDDTDGETVKNPAAHSTMPPQKSNAENAVRNSHSTVPKTPKYSDVTARERLYGQRLHQKTAGGNSEASAPSDESASGSPTEDEVNDE</sequence>
<dbReference type="EMBL" id="M58557">
    <property type="protein sequence ID" value="AAA98190.1"/>
    <property type="molecule type" value="Genomic_DNA"/>
</dbReference>
<dbReference type="EMBL" id="X55648">
    <property type="protein sequence ID" value="CAA39176.1"/>
    <property type="molecule type" value="Genomic_DNA"/>
</dbReference>
<dbReference type="EMBL" id="AF016485">
    <property type="protein sequence ID" value="AAC82803.1"/>
    <property type="molecule type" value="Genomic_DNA"/>
</dbReference>
<dbReference type="EMBL" id="AE004438">
    <property type="protein sequence ID" value="AAG20720.1"/>
    <property type="molecule type" value="Genomic_DNA"/>
</dbReference>
<dbReference type="PIR" id="T08236">
    <property type="entry name" value="T08236"/>
</dbReference>
<dbReference type="RefSeq" id="WP_010890525.1">
    <property type="nucleotide sequence ID" value="NC_001869.1"/>
</dbReference>
<dbReference type="SMR" id="Q9HI24"/>
<dbReference type="GeneID" id="5954624"/>
<dbReference type="KEGG" id="hal:gvpI"/>
<dbReference type="KEGG" id="hal:VNG_6023G"/>
<dbReference type="HOGENOM" id="CLU_147792_0_0_2"/>
<dbReference type="InParanoid" id="Q9HI24"/>
<dbReference type="OrthoDB" id="351320at2157"/>
<dbReference type="Proteomes" id="UP000000554">
    <property type="component" value="Plasmid pNRC100"/>
</dbReference>
<dbReference type="Proteomes" id="UP000000554">
    <property type="component" value="Plasmid pNRC200"/>
</dbReference>
<dbReference type="GO" id="GO:0031411">
    <property type="term" value="C:gas vesicle"/>
    <property type="evidence" value="ECO:0007669"/>
    <property type="project" value="UniProtKB-SubCell"/>
</dbReference>
<accession>Q9HI24</accession>
<accession>P24373</accession>
<accession>P57732</accession>
<gene>
    <name type="primary">gvpI11</name>
    <name evidence="13" type="synonym">gvpI</name>
    <name evidence="12" type="synonym">p-gvpI</name>
    <name type="ordered locus">VNG_5023G</name>
</gene>
<gene>
    <name evidence="18" type="primary">gvpI1</name>
    <name evidence="18" type="ordered locus">VNG_6023G</name>
</gene>
<protein>
    <recommendedName>
        <fullName evidence="14">Gas vesicle protein I1</fullName>
        <shortName evidence="14">GvpI1</shortName>
    </recommendedName>
</protein>